<gene>
    <name type="primary">HERVK_113</name>
</gene>
<comment type="function">
    <text evidence="4">Retroviral envelope proteins mediate receptor recognition and membrane fusion during early infection. Endogenous envelope proteins may have kept, lost or modified their original function during evolution. This endogenous envelope protein has lost its original fusogenic properties.</text>
</comment>
<comment type="function">
    <text evidence="1">SU mediates receptor recognition.</text>
</comment>
<comment type="function">
    <text evidence="1">TM anchors the envelope heterodimer to the viral membrane through one transmembrane domain. The other hydrophobic domain, called fusion peptide, mediates fusion of the viral membrane with the target cell membrane (By similarity).</text>
</comment>
<comment type="subunit">
    <text evidence="1">The surface (SU) and transmembrane (TM) proteins form a heterodimer. SU and TM are attached by noncovalent interactions or by a labile interchain disulfide bond (By similarity).</text>
</comment>
<comment type="subcellular location">
    <molecule>Transmembrane protein</molecule>
    <subcellularLocation>
        <location evidence="1">Cell membrane</location>
        <topology evidence="1">Single-pass type I membrane protein</topology>
    </subcellularLocation>
</comment>
<comment type="subcellular location">
    <molecule>Surface protein</molecule>
    <subcellularLocation>
        <location evidence="1">Cell membrane</location>
        <topology evidence="1">Peripheral membrane protein</topology>
    </subcellularLocation>
    <text evidence="1">The surface protein is not anchored to the membrane, but localizes to the extracellular surface through its binding to TM.</text>
</comment>
<comment type="subcellular location">
    <molecule>Endogenous retrovirus group K member 113 Env polyprotein</molecule>
    <subcellularLocation>
        <location evidence="1">Virion</location>
    </subcellularLocation>
</comment>
<comment type="PTM">
    <text evidence="1">Specific enzymatic cleavages in vivo yield the mature SU and TM proteins.</text>
</comment>
<comment type="miscellaneous">
    <text>Insertional polymorphism. Provirus present in 29% of tested individuals.</text>
</comment>
<comment type="miscellaneous">
    <text>Has a type 2 genome. The HERV-K(HML-2) family contains type 1 and type 2 genomes depending on the absence or presence of 292 nucleotides at the 5'-end of the env gene resulting in Env proteins of distinct sizes. Despite their overall retroviral envelope structure HERV-K(HML-2) type 1 envelope proteins lack a predictable signal sequence. Subgenomic RNA transcripts coding for full-length envelope proteins have been detected for both type of genomes.</text>
</comment>
<comment type="similarity">
    <text evidence="5">Belongs to the beta type-B retroviral envelope protein family. HERV class-II K(HML-2) env subfamily.</text>
</comment>
<keyword id="KW-1003">Cell membrane</keyword>
<keyword id="KW-0165">Cleavage on pair of basic residues</keyword>
<keyword id="KW-1015">Disulfide bond</keyword>
<keyword id="KW-0895">ERV</keyword>
<keyword id="KW-0325">Glycoprotein</keyword>
<keyword id="KW-0472">Membrane</keyword>
<keyword id="KW-1185">Reference proteome</keyword>
<keyword id="KW-0732">Signal</keyword>
<keyword id="KW-0812">Transmembrane</keyword>
<keyword id="KW-1133">Transmembrane helix</keyword>
<keyword id="KW-0814">Transposable element</keyword>
<keyword id="KW-0261">Viral envelope protein</keyword>
<keyword id="KW-0946">Virion</keyword>
<accession>Q902F9</accession>
<proteinExistence type="evidence at protein level"/>
<feature type="signal peptide" evidence="2">
    <location>
        <begin position="1"/>
        <end position="89"/>
    </location>
</feature>
<feature type="chain" id="PRO_0000008509" description="Endogenous retrovirus group K member 113 Env polyprotein">
    <location>
        <begin position="90"/>
        <end position="699"/>
    </location>
</feature>
<feature type="chain" id="PRO_0000008510" description="Surface protein" evidence="1">
    <location>
        <begin position="90"/>
        <end position="465"/>
    </location>
</feature>
<feature type="chain" id="PRO_0000008511" description="Transmembrane protein" evidence="1">
    <location>
        <begin position="466"/>
        <end position="699"/>
    </location>
</feature>
<feature type="topological domain" description="Extracellular" evidence="2">
    <location>
        <begin position="90"/>
        <end position="632"/>
    </location>
</feature>
<feature type="transmembrane region" description="Helical" evidence="2">
    <location>
        <begin position="633"/>
        <end position="653"/>
    </location>
</feature>
<feature type="topological domain" description="Cytoplasmic" evidence="2">
    <location>
        <begin position="654"/>
        <end position="699"/>
    </location>
</feature>
<feature type="region of interest" description="Disordered" evidence="3">
    <location>
        <begin position="1"/>
        <end position="47"/>
    </location>
</feature>
<feature type="region of interest" description="Fusion peptide" evidence="2">
    <location>
        <begin position="466"/>
        <end position="486"/>
    </location>
</feature>
<feature type="compositionally biased region" description="Basic residues" evidence="3">
    <location>
        <begin position="10"/>
        <end position="20"/>
    </location>
</feature>
<feature type="site" description="Cleavage" evidence="1">
    <location>
        <begin position="465"/>
        <end position="466"/>
    </location>
</feature>
<feature type="glycosylation site" description="N-linked (GlcNAc...) asparagine" evidence="2">
    <location>
        <position position="100"/>
    </location>
</feature>
<feature type="glycosylation site" description="N-linked (GlcNAc...) asparagine" evidence="2">
    <location>
        <position position="128"/>
    </location>
</feature>
<feature type="glycosylation site" description="N-linked (GlcNAc...) asparagine" evidence="2">
    <location>
        <position position="153"/>
    </location>
</feature>
<feature type="glycosylation site" description="N-linked (GlcNAc...) asparagine" evidence="2">
    <location>
        <position position="274"/>
    </location>
</feature>
<feature type="glycosylation site" description="N-linked (GlcNAc...) asparagine" evidence="2">
    <location>
        <position position="355"/>
    </location>
</feature>
<feature type="glycosylation site" description="N-linked (GlcNAc...) asparagine" evidence="2">
    <location>
        <position position="372"/>
    </location>
</feature>
<feature type="glycosylation site" description="N-linked (GlcNAc...) asparagine" evidence="2">
    <location>
        <position position="461"/>
    </location>
</feature>
<feature type="glycosylation site" description="N-linked (GlcNAc...) asparagine" evidence="2">
    <location>
        <position position="507"/>
    </location>
</feature>
<feature type="glycosylation site" description="N-linked (GlcNAc...) asparagine" evidence="2">
    <location>
        <position position="554"/>
    </location>
</feature>
<feature type="glycosylation site" description="N-linked (GlcNAc...) asparagine" evidence="2">
    <location>
        <position position="566"/>
    </location>
</feature>
<feature type="glycosylation site" description="N-linked (GlcNAc...) asparagine" evidence="2">
    <location>
        <position position="585"/>
    </location>
</feature>
<protein>
    <recommendedName>
        <fullName>Endogenous retrovirus group K member 113 Env polyprotein</fullName>
    </recommendedName>
    <alternativeName>
        <fullName>EnvK5 protein</fullName>
    </alternativeName>
    <alternativeName>
        <fullName>Envelope polyprotein</fullName>
    </alternativeName>
    <alternativeName>
        <fullName>HERV-K113 envelope protein</fullName>
    </alternativeName>
    <alternativeName>
        <fullName>HERV-K_19p13.11 provirus ancestral Env polyprotein</fullName>
    </alternativeName>
    <component>
        <recommendedName>
            <fullName>Surface protein</fullName>
            <shortName>SU</shortName>
        </recommendedName>
    </component>
    <component>
        <recommendedName>
            <fullName>Transmembrane protein</fullName>
            <shortName>TM</shortName>
        </recommendedName>
    </component>
</protein>
<name>EN113_HUMAN</name>
<dbReference type="EMBL" id="AC112702">
    <property type="status" value="NOT_ANNOTATED_CDS"/>
    <property type="molecule type" value="Genomic_DNA"/>
</dbReference>
<dbReference type="IntAct" id="Q902F9">
    <property type="interactions" value="1"/>
</dbReference>
<dbReference type="GlyCosmos" id="Q902F9">
    <property type="glycosylation" value="12 sites, No reported glycans"/>
</dbReference>
<dbReference type="GlyGen" id="Q902F9">
    <property type="glycosylation" value="14 sites"/>
</dbReference>
<dbReference type="PhosphoSitePlus" id="Q902F9"/>
<dbReference type="BioMuta" id="HERVK_113"/>
<dbReference type="jPOST" id="Q902F9"/>
<dbReference type="MassIVE" id="Q902F9"/>
<dbReference type="neXtProt" id="NX_Q902F9"/>
<dbReference type="InParanoid" id="Q902F9"/>
<dbReference type="PAN-GO" id="Q902F9">
    <property type="GO annotations" value="0 GO annotations based on evolutionary models"/>
</dbReference>
<dbReference type="PhylomeDB" id="Q902F9"/>
<dbReference type="Pharos" id="Q902F9">
    <property type="development level" value="Tdark"/>
</dbReference>
<dbReference type="Proteomes" id="UP000005640">
    <property type="component" value="Unplaced"/>
</dbReference>
<dbReference type="RNAct" id="Q902F9">
    <property type="molecule type" value="protein"/>
</dbReference>
<dbReference type="GO" id="GO:0005886">
    <property type="term" value="C:plasma membrane"/>
    <property type="evidence" value="ECO:0007669"/>
    <property type="project" value="UniProtKB-SubCell"/>
</dbReference>
<dbReference type="GO" id="GO:0005198">
    <property type="term" value="F:structural molecule activity"/>
    <property type="evidence" value="ECO:0007669"/>
    <property type="project" value="InterPro"/>
</dbReference>
<dbReference type="CDD" id="cd09909">
    <property type="entry name" value="HIV-1-like_HR1-HR2"/>
    <property type="match status" value="1"/>
</dbReference>
<dbReference type="InterPro" id="IPR000328">
    <property type="entry name" value="GP41-like"/>
</dbReference>
<dbReference type="InterPro" id="IPR029104">
    <property type="entry name" value="HERV-K_env"/>
</dbReference>
<dbReference type="InterPro" id="IPR051255">
    <property type="entry name" value="Retroviral_env_glycoprotein"/>
</dbReference>
<dbReference type="PANTHER" id="PTHR34313">
    <property type="entry name" value="ENDOGENOUS RETROVIRUS GROUP K MEMBER 113 ENV POLYPROTEIN-RELATED"/>
    <property type="match status" value="1"/>
</dbReference>
<dbReference type="PANTHER" id="PTHR34313:SF3">
    <property type="entry name" value="ENDOGENOUS RETROVIRUS GROUP K MEMBER 113 ENV POLYPROTEIN-RELATED"/>
    <property type="match status" value="1"/>
</dbReference>
<dbReference type="Pfam" id="PF00517">
    <property type="entry name" value="GP41"/>
    <property type="match status" value="1"/>
</dbReference>
<dbReference type="Pfam" id="PF13804">
    <property type="entry name" value="HERV-K_env_2"/>
    <property type="match status" value="1"/>
</dbReference>
<dbReference type="Pfam" id="PF15695">
    <property type="entry name" value="HERV-K_REC"/>
    <property type="match status" value="1"/>
</dbReference>
<evidence type="ECO:0000250" key="1"/>
<evidence type="ECO:0000255" key="2"/>
<evidence type="ECO:0000256" key="3">
    <source>
        <dbReference type="SAM" id="MobiDB-lite"/>
    </source>
</evidence>
<evidence type="ECO:0000269" key="4">
    <source>
    </source>
</evidence>
<evidence type="ECO:0000305" key="5"/>
<reference key="1">
    <citation type="journal article" date="2004" name="Nature">
        <title>The DNA sequence and biology of human chromosome 19.</title>
        <authorList>
            <person name="Grimwood J."/>
            <person name="Gordon L.A."/>
            <person name="Olsen A.S."/>
            <person name="Terry A."/>
            <person name="Schmutz J."/>
            <person name="Lamerdin J.E."/>
            <person name="Hellsten U."/>
            <person name="Goodstein D."/>
            <person name="Couronne O."/>
            <person name="Tran-Gyamfi M."/>
            <person name="Aerts A."/>
            <person name="Altherr M."/>
            <person name="Ashworth L."/>
            <person name="Bajorek E."/>
            <person name="Black S."/>
            <person name="Branscomb E."/>
            <person name="Caenepeel S."/>
            <person name="Carrano A.V."/>
            <person name="Caoile C."/>
            <person name="Chan Y.M."/>
            <person name="Christensen M."/>
            <person name="Cleland C.A."/>
            <person name="Copeland A."/>
            <person name="Dalin E."/>
            <person name="Dehal P."/>
            <person name="Denys M."/>
            <person name="Detter J.C."/>
            <person name="Escobar J."/>
            <person name="Flowers D."/>
            <person name="Fotopulos D."/>
            <person name="Garcia C."/>
            <person name="Georgescu A.M."/>
            <person name="Glavina T."/>
            <person name="Gomez M."/>
            <person name="Gonzales E."/>
            <person name="Groza M."/>
            <person name="Hammon N."/>
            <person name="Hawkins T."/>
            <person name="Haydu L."/>
            <person name="Ho I."/>
            <person name="Huang W."/>
            <person name="Israni S."/>
            <person name="Jett J."/>
            <person name="Kadner K."/>
            <person name="Kimball H."/>
            <person name="Kobayashi A."/>
            <person name="Larionov V."/>
            <person name="Leem S.-H."/>
            <person name="Lopez F."/>
            <person name="Lou Y."/>
            <person name="Lowry S."/>
            <person name="Malfatti S."/>
            <person name="Martinez D."/>
            <person name="McCready P.M."/>
            <person name="Medina C."/>
            <person name="Morgan J."/>
            <person name="Nelson K."/>
            <person name="Nolan M."/>
            <person name="Ovcharenko I."/>
            <person name="Pitluck S."/>
            <person name="Pollard M."/>
            <person name="Popkie A.P."/>
            <person name="Predki P."/>
            <person name="Quan G."/>
            <person name="Ramirez L."/>
            <person name="Rash S."/>
            <person name="Retterer J."/>
            <person name="Rodriguez A."/>
            <person name="Rogers S."/>
            <person name="Salamov A."/>
            <person name="Salazar A."/>
            <person name="She X."/>
            <person name="Smith D."/>
            <person name="Slezak T."/>
            <person name="Solovyev V."/>
            <person name="Thayer N."/>
            <person name="Tice H."/>
            <person name="Tsai M."/>
            <person name="Ustaszewska A."/>
            <person name="Vo N."/>
            <person name="Wagner M."/>
            <person name="Wheeler J."/>
            <person name="Wu K."/>
            <person name="Xie G."/>
            <person name="Yang J."/>
            <person name="Dubchak I."/>
            <person name="Furey T.S."/>
            <person name="DeJong P."/>
            <person name="Dickson M."/>
            <person name="Gordon D."/>
            <person name="Eichler E.E."/>
            <person name="Pennacchio L.A."/>
            <person name="Richardson P."/>
            <person name="Stubbs L."/>
            <person name="Rokhsar D.S."/>
            <person name="Myers R.M."/>
            <person name="Rubin E.M."/>
            <person name="Lucas S.M."/>
        </authorList>
    </citation>
    <scope>NUCLEOTIDE SEQUENCE [LARGE SCALE GENOMIC DNA]</scope>
</reference>
<reference key="2">
    <citation type="journal article" date="2001" name="Curr. Biol.">
        <title>Insertional polymorphisms of full-length endogenous retroviruses in humans.</title>
        <authorList>
            <person name="Turner G."/>
            <person name="Barbulescu M."/>
            <person name="Su M."/>
            <person name="Jensen-Seaman M.I."/>
            <person name="Kidd K.K."/>
            <person name="Lenz J."/>
        </authorList>
    </citation>
    <scope>IDENTIFICATION</scope>
</reference>
<reference key="3">
    <citation type="journal article" date="2003" name="J. Virol.">
        <title>Survey of human genes of retroviral origin: identification and transcriptome of the genes with coding capacity for complete envelope proteins.</title>
        <authorList>
            <person name="de Parseval N."/>
            <person name="Lazar V."/>
            <person name="Casella J.-F."/>
            <person name="Benit L."/>
            <person name="Heidmann T."/>
        </authorList>
    </citation>
    <scope>CHARACTERIZATION</scope>
</reference>
<reference key="4">
    <citation type="journal article" date="2003" name="Proc. Natl. Acad. Sci. U.S.A.">
        <title>Genomewide screening for fusogenic human endogenous retrovirus envelopes identifies syncytin 2, a gene conserved on primate evolution.</title>
        <authorList>
            <person name="Blaise S."/>
            <person name="de Parseval N."/>
            <person name="Benit L."/>
            <person name="Heidmann T."/>
        </authorList>
    </citation>
    <scope>FUNCTION</scope>
</reference>
<reference key="5">
    <citation type="journal article" date="2003" name="Oncogene">
        <title>Quantitation of HERV-K env gene expression and splicing in human breast cancer.</title>
        <authorList>
            <person name="Wang-Johanning F."/>
            <person name="Frost A.R."/>
            <person name="Jian B."/>
            <person name="Epp L."/>
            <person name="Lu D.W."/>
            <person name="Johanning G.L."/>
        </authorList>
    </citation>
    <scope>SUBGENOMIC RNA</scope>
</reference>
<sequence>MNPSEMQRKAPPRRRRHRNRAPLTHKMNKMVTSEEQMKLPSTKKAEPPTWAQLKKLTQLATKYLENTKVTQTPESMLLAALMIVSMVVSLPMPAGAAAANYTYWAYVPFPPLIRAVTWMDNPIEVYVNDSVWVPGPTDDHCPAKPEEEGMMINISIGYRYPPICLGRAPGCLMPAVQNWLVEVPTVSPISRFTYHMVSGMSLRPRVNYLQDFSYQRSFKFRPKGKPCPKEIPKESKNTEVLVWEECVANSAVILQNNEFGTIIDWAPRGQFYHNCSGQTQSCPSAQVSPAVDSDLTESLDKHKHKKLQSFYPWEWGEKGISTPRPKIISPVSGPEHPELWRLTVASHHIRIWSGNQTLETRDRKPFYTVDLNSSLTVPLQSCIKPPYMLVVGNIVIKPDSQTITCENCRLLTCIDSTFNWQHRILLVRAREGVWIPVSMDRPWEASPSIHTLTEVLKGVLNRSKRFIFTLIAVIMGLIAVTATAAVAGVALHSSVQSVNFVNDWQKNSTRLWNSQSSIDQKLANQINDLRQTVIWMGDRLMSLEHRFQLQCDWNTSDFSITPQIYNESEHHWDMVRRHLQGREDNLTLDISKLKEQIFEASKAHLNLVPGTEAIAGVADGLANLNPVTWVKTIGSTTIINLILILVCLFCLLLVCRCTQQLRRDSDHRERAMMTMAVLSKRKGGNVGKSKRDQIVTVSV</sequence>
<organism>
    <name type="scientific">Homo sapiens</name>
    <name type="common">Human</name>
    <dbReference type="NCBI Taxonomy" id="9606"/>
    <lineage>
        <taxon>Eukaryota</taxon>
        <taxon>Metazoa</taxon>
        <taxon>Chordata</taxon>
        <taxon>Craniata</taxon>
        <taxon>Vertebrata</taxon>
        <taxon>Euteleostomi</taxon>
        <taxon>Mammalia</taxon>
        <taxon>Eutheria</taxon>
        <taxon>Euarchontoglires</taxon>
        <taxon>Primates</taxon>
        <taxon>Haplorrhini</taxon>
        <taxon>Catarrhini</taxon>
        <taxon>Hominidae</taxon>
        <taxon>Homo</taxon>
    </lineage>
</organism>